<name>ANMK_SULDN</name>
<proteinExistence type="inferred from homology"/>
<protein>
    <recommendedName>
        <fullName evidence="1">Anhydro-N-acetylmuramic acid kinase</fullName>
        <ecNumber evidence="1">2.7.1.170</ecNumber>
    </recommendedName>
    <alternativeName>
        <fullName evidence="1">AnhMurNAc kinase</fullName>
    </alternativeName>
</protein>
<gene>
    <name evidence="1" type="primary">anmK</name>
    <name type="ordered locus">Suden_2071</name>
</gene>
<dbReference type="EC" id="2.7.1.170" evidence="1"/>
<dbReference type="EMBL" id="CP000153">
    <property type="protein sequence ID" value="ABB45345.1"/>
    <property type="molecule type" value="Genomic_DNA"/>
</dbReference>
<dbReference type="RefSeq" id="WP_011373685.1">
    <property type="nucleotide sequence ID" value="NC_007575.1"/>
</dbReference>
<dbReference type="SMR" id="Q30NT6"/>
<dbReference type="STRING" id="326298.Suden_2071"/>
<dbReference type="KEGG" id="tdn:Suden_2071"/>
<dbReference type="eggNOG" id="COG2377">
    <property type="taxonomic scope" value="Bacteria"/>
</dbReference>
<dbReference type="HOGENOM" id="CLU_038782_0_0_7"/>
<dbReference type="OrthoDB" id="9763949at2"/>
<dbReference type="UniPathway" id="UPA00343"/>
<dbReference type="UniPathway" id="UPA00544"/>
<dbReference type="Proteomes" id="UP000002714">
    <property type="component" value="Chromosome"/>
</dbReference>
<dbReference type="GO" id="GO:0005524">
    <property type="term" value="F:ATP binding"/>
    <property type="evidence" value="ECO:0007669"/>
    <property type="project" value="UniProtKB-UniRule"/>
</dbReference>
<dbReference type="GO" id="GO:0016301">
    <property type="term" value="F:kinase activity"/>
    <property type="evidence" value="ECO:0007669"/>
    <property type="project" value="UniProtKB-KW"/>
</dbReference>
<dbReference type="GO" id="GO:0016773">
    <property type="term" value="F:phosphotransferase activity, alcohol group as acceptor"/>
    <property type="evidence" value="ECO:0007669"/>
    <property type="project" value="UniProtKB-UniRule"/>
</dbReference>
<dbReference type="GO" id="GO:0097175">
    <property type="term" value="P:1,6-anhydro-N-acetyl-beta-muramic acid catabolic process"/>
    <property type="evidence" value="ECO:0007669"/>
    <property type="project" value="UniProtKB-UniRule"/>
</dbReference>
<dbReference type="GO" id="GO:0006040">
    <property type="term" value="P:amino sugar metabolic process"/>
    <property type="evidence" value="ECO:0007669"/>
    <property type="project" value="InterPro"/>
</dbReference>
<dbReference type="GO" id="GO:0009254">
    <property type="term" value="P:peptidoglycan turnover"/>
    <property type="evidence" value="ECO:0007669"/>
    <property type="project" value="UniProtKB-UniRule"/>
</dbReference>
<dbReference type="CDD" id="cd24050">
    <property type="entry name" value="ASKHA_NBD_ANMK"/>
    <property type="match status" value="1"/>
</dbReference>
<dbReference type="Gene3D" id="3.30.420.40">
    <property type="match status" value="2"/>
</dbReference>
<dbReference type="HAMAP" id="MF_01270">
    <property type="entry name" value="AnhMurNAc_kinase"/>
    <property type="match status" value="1"/>
</dbReference>
<dbReference type="InterPro" id="IPR005338">
    <property type="entry name" value="Anhydro_N_Ac-Mur_kinase"/>
</dbReference>
<dbReference type="InterPro" id="IPR043129">
    <property type="entry name" value="ATPase_NBD"/>
</dbReference>
<dbReference type="NCBIfam" id="NF007139">
    <property type="entry name" value="PRK09585.1-3"/>
    <property type="match status" value="1"/>
</dbReference>
<dbReference type="PANTHER" id="PTHR30605">
    <property type="entry name" value="ANHYDRO-N-ACETYLMURAMIC ACID KINASE"/>
    <property type="match status" value="1"/>
</dbReference>
<dbReference type="PANTHER" id="PTHR30605:SF0">
    <property type="entry name" value="ANHYDRO-N-ACETYLMURAMIC ACID KINASE"/>
    <property type="match status" value="1"/>
</dbReference>
<dbReference type="Pfam" id="PF03702">
    <property type="entry name" value="AnmK"/>
    <property type="match status" value="1"/>
</dbReference>
<dbReference type="SUPFAM" id="SSF53067">
    <property type="entry name" value="Actin-like ATPase domain"/>
    <property type="match status" value="1"/>
</dbReference>
<sequence length="368" mass="40961">MSEFYIGVMSGTSLDGIDLALCEIEDDAFELLLCASYPFDAELKSDILNAINAQTTLKNIGEIDIRLGKMYADALEKFIEENSLKRVKIRAIGLHGQTLWHEPESQNPFSMQLGNANILTARLGICVVSDFRQKDIALGGQGAPFTPAFHEFLFSKLSGNVAVLNIGGMANITLLREMLSGYDTGCGNVLMDYWISKYNGSPYDKDGEWAKSGTPNRELLREFLKEPYFLKSPPKSTGRELFGEKWLKKQLSEFAKKNQNCSYLKARDIQATLLELSVQSIANEIKKSDTTLLIVCGGGINNRYLMERLQEELGDIKIASSDEYGVSSEFMEAMAFAWLAHERIHKKCVKISSVSGALRDSILGAIYE</sequence>
<accession>Q30NT6</accession>
<comment type="function">
    <text evidence="1">Catalyzes the specific phosphorylation of 1,6-anhydro-N-acetylmuramic acid (anhMurNAc) with the simultaneous cleavage of the 1,6-anhydro ring, generating MurNAc-6-P. Is required for the utilization of anhMurNAc either imported from the medium or derived from its own cell wall murein, and thus plays a role in cell wall recycling.</text>
</comment>
<comment type="catalytic activity">
    <reaction evidence="1">
        <text>1,6-anhydro-N-acetyl-beta-muramate + ATP + H2O = N-acetyl-D-muramate 6-phosphate + ADP + H(+)</text>
        <dbReference type="Rhea" id="RHEA:24952"/>
        <dbReference type="ChEBI" id="CHEBI:15377"/>
        <dbReference type="ChEBI" id="CHEBI:15378"/>
        <dbReference type="ChEBI" id="CHEBI:30616"/>
        <dbReference type="ChEBI" id="CHEBI:58690"/>
        <dbReference type="ChEBI" id="CHEBI:58722"/>
        <dbReference type="ChEBI" id="CHEBI:456216"/>
        <dbReference type="EC" id="2.7.1.170"/>
    </reaction>
</comment>
<comment type="pathway">
    <text evidence="1">Amino-sugar metabolism; 1,6-anhydro-N-acetylmuramate degradation.</text>
</comment>
<comment type="pathway">
    <text evidence="1">Cell wall biogenesis; peptidoglycan recycling.</text>
</comment>
<comment type="similarity">
    <text evidence="1">Belongs to the anhydro-N-acetylmuramic acid kinase family.</text>
</comment>
<organism>
    <name type="scientific">Sulfurimonas denitrificans (strain ATCC 33889 / DSM 1251)</name>
    <name type="common">Thiomicrospira denitrificans (strain ATCC 33889 / DSM 1251)</name>
    <dbReference type="NCBI Taxonomy" id="326298"/>
    <lineage>
        <taxon>Bacteria</taxon>
        <taxon>Pseudomonadati</taxon>
        <taxon>Campylobacterota</taxon>
        <taxon>Epsilonproteobacteria</taxon>
        <taxon>Campylobacterales</taxon>
        <taxon>Sulfurimonadaceae</taxon>
        <taxon>Sulfurimonas</taxon>
    </lineage>
</organism>
<reference key="1">
    <citation type="journal article" date="2008" name="Appl. Environ. Microbiol.">
        <title>Genome of the epsilonproteobacterial chemolithoautotroph Sulfurimonas denitrificans.</title>
        <authorList>
            <person name="Sievert S.M."/>
            <person name="Scott K.M."/>
            <person name="Klotz M.G."/>
            <person name="Chain P.S.G."/>
            <person name="Hauser L.J."/>
            <person name="Hemp J."/>
            <person name="Huegler M."/>
            <person name="Land M."/>
            <person name="Lapidus A."/>
            <person name="Larimer F.W."/>
            <person name="Lucas S."/>
            <person name="Malfatti S.A."/>
            <person name="Meyer F."/>
            <person name="Paulsen I.T."/>
            <person name="Ren Q."/>
            <person name="Simon J."/>
            <person name="Bailey K."/>
            <person name="Diaz E."/>
            <person name="Fitzpatrick K.A."/>
            <person name="Glover B."/>
            <person name="Gwatney N."/>
            <person name="Korajkic A."/>
            <person name="Long A."/>
            <person name="Mobberley J.M."/>
            <person name="Pantry S.N."/>
            <person name="Pazder G."/>
            <person name="Peterson S."/>
            <person name="Quintanilla J.D."/>
            <person name="Sprinkle R."/>
            <person name="Stephens J."/>
            <person name="Thomas P."/>
            <person name="Vaughn R."/>
            <person name="Weber M.J."/>
            <person name="Wooten L.L."/>
        </authorList>
    </citation>
    <scope>NUCLEOTIDE SEQUENCE [LARGE SCALE GENOMIC DNA]</scope>
    <source>
        <strain>ATCC 33889 / DSM 1251</strain>
    </source>
</reference>
<evidence type="ECO:0000255" key="1">
    <source>
        <dbReference type="HAMAP-Rule" id="MF_01270"/>
    </source>
</evidence>
<keyword id="KW-0067">ATP-binding</keyword>
<keyword id="KW-0119">Carbohydrate metabolism</keyword>
<keyword id="KW-0418">Kinase</keyword>
<keyword id="KW-0547">Nucleotide-binding</keyword>
<keyword id="KW-1185">Reference proteome</keyword>
<keyword id="KW-0808">Transferase</keyword>
<feature type="chain" id="PRO_0000250077" description="Anhydro-N-acetylmuramic acid kinase">
    <location>
        <begin position="1"/>
        <end position="368"/>
    </location>
</feature>
<feature type="binding site" evidence="1">
    <location>
        <begin position="11"/>
        <end position="18"/>
    </location>
    <ligand>
        <name>ATP</name>
        <dbReference type="ChEBI" id="CHEBI:30616"/>
    </ligand>
</feature>